<keyword id="KW-0472">Membrane</keyword>
<keyword id="KW-0520">NAD</keyword>
<keyword id="KW-0521">NADP</keyword>
<keyword id="KW-0618">Plastoquinone</keyword>
<keyword id="KW-0874">Quinone</keyword>
<keyword id="KW-1185">Reference proteome</keyword>
<keyword id="KW-0793">Thylakoid</keyword>
<keyword id="KW-1278">Translocase</keyword>
<keyword id="KW-0812">Transmembrane</keyword>
<keyword id="KW-1133">Transmembrane helix</keyword>
<keyword id="KW-0813">Transport</keyword>
<comment type="function">
    <text evidence="1">NDH-1 shuttles electrons from an unknown electron donor, via FMN and iron-sulfur (Fe-S) centers, to quinones in the respiratory and/or the photosynthetic chain. The immediate electron acceptor for the enzyme in this species is believed to be plastoquinone. Couples the redox reaction to proton translocation, and thus conserves the redox energy in a proton gradient. Cyanobacterial NDH-1 also plays a role in inorganic carbon-concentration.</text>
</comment>
<comment type="catalytic activity">
    <reaction evidence="1">
        <text>a plastoquinone + NADH + (n+1) H(+)(in) = a plastoquinol + NAD(+) + n H(+)(out)</text>
        <dbReference type="Rhea" id="RHEA:42608"/>
        <dbReference type="Rhea" id="RHEA-COMP:9561"/>
        <dbReference type="Rhea" id="RHEA-COMP:9562"/>
        <dbReference type="ChEBI" id="CHEBI:15378"/>
        <dbReference type="ChEBI" id="CHEBI:17757"/>
        <dbReference type="ChEBI" id="CHEBI:57540"/>
        <dbReference type="ChEBI" id="CHEBI:57945"/>
        <dbReference type="ChEBI" id="CHEBI:62192"/>
    </reaction>
</comment>
<comment type="catalytic activity">
    <reaction evidence="1">
        <text>a plastoquinone + NADPH + (n+1) H(+)(in) = a plastoquinol + NADP(+) + n H(+)(out)</text>
        <dbReference type="Rhea" id="RHEA:42612"/>
        <dbReference type="Rhea" id="RHEA-COMP:9561"/>
        <dbReference type="Rhea" id="RHEA-COMP:9562"/>
        <dbReference type="ChEBI" id="CHEBI:15378"/>
        <dbReference type="ChEBI" id="CHEBI:17757"/>
        <dbReference type="ChEBI" id="CHEBI:57783"/>
        <dbReference type="ChEBI" id="CHEBI:58349"/>
        <dbReference type="ChEBI" id="CHEBI:62192"/>
    </reaction>
</comment>
<comment type="subunit">
    <text evidence="1">NDH-1 can be composed of about 15 different subunits; different subcomplexes with different compositions have been identified which probably have different functions.</text>
</comment>
<comment type="subcellular location">
    <subcellularLocation>
        <location evidence="1">Cellular thylakoid membrane</location>
        <topology evidence="1">Multi-pass membrane protein</topology>
    </subcellularLocation>
</comment>
<comment type="similarity">
    <text evidence="1">Belongs to the complex I subunit 3 family.</text>
</comment>
<gene>
    <name evidence="1" type="primary">ndhC</name>
    <name type="ordered locus">P9301_03181</name>
</gene>
<name>NU3C_PROM0</name>
<protein>
    <recommendedName>
        <fullName evidence="1">NAD(P)H-quinone oxidoreductase subunit 3</fullName>
        <ecNumber evidence="1">7.1.1.-</ecNumber>
    </recommendedName>
    <alternativeName>
        <fullName evidence="1">NAD(P)H dehydrogenase subunit 3</fullName>
    </alternativeName>
    <alternativeName>
        <fullName evidence="1">NADH-plastoquinone oxidoreductase subunit 3</fullName>
    </alternativeName>
    <alternativeName>
        <fullName evidence="1">NDH-1 subunit 3</fullName>
        <shortName evidence="1">NDH-C</shortName>
    </alternativeName>
</protein>
<organism>
    <name type="scientific">Prochlorococcus marinus (strain MIT 9301)</name>
    <dbReference type="NCBI Taxonomy" id="167546"/>
    <lineage>
        <taxon>Bacteria</taxon>
        <taxon>Bacillati</taxon>
        <taxon>Cyanobacteriota</taxon>
        <taxon>Cyanophyceae</taxon>
        <taxon>Synechococcales</taxon>
        <taxon>Prochlorococcaceae</taxon>
        <taxon>Prochlorococcus</taxon>
    </lineage>
</organism>
<feature type="chain" id="PRO_0000362722" description="NAD(P)H-quinone oxidoreductase subunit 3">
    <location>
        <begin position="1"/>
        <end position="120"/>
    </location>
</feature>
<feature type="transmembrane region" description="Helical" evidence="1">
    <location>
        <begin position="10"/>
        <end position="30"/>
    </location>
</feature>
<feature type="transmembrane region" description="Helical" evidence="1">
    <location>
        <begin position="64"/>
        <end position="84"/>
    </location>
</feature>
<feature type="transmembrane region" description="Helical" evidence="1">
    <location>
        <begin position="89"/>
        <end position="109"/>
    </location>
</feature>
<proteinExistence type="inferred from homology"/>
<evidence type="ECO:0000255" key="1">
    <source>
        <dbReference type="HAMAP-Rule" id="MF_01394"/>
    </source>
</evidence>
<sequence length="120" mass="13562">MFLLTGYEYFLGFLLIAAAVPVLALVTNLIVAPKGRAGERRLTYESGMEPIGGAWIQFNIRYYMFALVFVIFDVETVFLYPWAVAFNRLGLLAFIEALIFIAILVIALAYAWRKGALEWS</sequence>
<accession>A3PB16</accession>
<reference key="1">
    <citation type="journal article" date="2007" name="PLoS Genet.">
        <title>Patterns and implications of gene gain and loss in the evolution of Prochlorococcus.</title>
        <authorList>
            <person name="Kettler G.C."/>
            <person name="Martiny A.C."/>
            <person name="Huang K."/>
            <person name="Zucker J."/>
            <person name="Coleman M.L."/>
            <person name="Rodrigue S."/>
            <person name="Chen F."/>
            <person name="Lapidus A."/>
            <person name="Ferriera S."/>
            <person name="Johnson J."/>
            <person name="Steglich C."/>
            <person name="Church G.M."/>
            <person name="Richardson P."/>
            <person name="Chisholm S.W."/>
        </authorList>
    </citation>
    <scope>NUCLEOTIDE SEQUENCE [LARGE SCALE GENOMIC DNA]</scope>
    <source>
        <strain>MIT 9301</strain>
    </source>
</reference>
<dbReference type="EC" id="7.1.1.-" evidence="1"/>
<dbReference type="EMBL" id="CP000576">
    <property type="protein sequence ID" value="ABO16941.1"/>
    <property type="molecule type" value="Genomic_DNA"/>
</dbReference>
<dbReference type="RefSeq" id="WP_011862334.1">
    <property type="nucleotide sequence ID" value="NC_009091.1"/>
</dbReference>
<dbReference type="SMR" id="A3PB16"/>
<dbReference type="STRING" id="167546.P9301_03181"/>
<dbReference type="KEGG" id="pmg:P9301_03181"/>
<dbReference type="eggNOG" id="COG0838">
    <property type="taxonomic scope" value="Bacteria"/>
</dbReference>
<dbReference type="HOGENOM" id="CLU_119549_1_1_3"/>
<dbReference type="OrthoDB" id="9791970at2"/>
<dbReference type="Proteomes" id="UP000001430">
    <property type="component" value="Chromosome"/>
</dbReference>
<dbReference type="GO" id="GO:0030964">
    <property type="term" value="C:NADH dehydrogenase complex"/>
    <property type="evidence" value="ECO:0007669"/>
    <property type="project" value="TreeGrafter"/>
</dbReference>
<dbReference type="GO" id="GO:0031676">
    <property type="term" value="C:plasma membrane-derived thylakoid membrane"/>
    <property type="evidence" value="ECO:0007669"/>
    <property type="project" value="UniProtKB-SubCell"/>
</dbReference>
<dbReference type="GO" id="GO:0008137">
    <property type="term" value="F:NADH dehydrogenase (ubiquinone) activity"/>
    <property type="evidence" value="ECO:0007669"/>
    <property type="project" value="InterPro"/>
</dbReference>
<dbReference type="GO" id="GO:0048038">
    <property type="term" value="F:quinone binding"/>
    <property type="evidence" value="ECO:0007669"/>
    <property type="project" value="UniProtKB-KW"/>
</dbReference>
<dbReference type="GO" id="GO:0019684">
    <property type="term" value="P:photosynthesis, light reaction"/>
    <property type="evidence" value="ECO:0007669"/>
    <property type="project" value="UniProtKB-UniRule"/>
</dbReference>
<dbReference type="Gene3D" id="1.20.58.1610">
    <property type="entry name" value="NADH:ubiquinone/plastoquinone oxidoreductase, chain 3"/>
    <property type="match status" value="1"/>
</dbReference>
<dbReference type="HAMAP" id="MF_01394">
    <property type="entry name" value="NDH1_NuoA"/>
    <property type="match status" value="1"/>
</dbReference>
<dbReference type="InterPro" id="IPR023043">
    <property type="entry name" value="NAD(P)H_OxRDtase_bac/plastid"/>
</dbReference>
<dbReference type="InterPro" id="IPR000440">
    <property type="entry name" value="NADH_UbQ/plastoQ_OxRdtase_su3"/>
</dbReference>
<dbReference type="InterPro" id="IPR038430">
    <property type="entry name" value="NDAH_ubi_oxred_su3_sf"/>
</dbReference>
<dbReference type="PANTHER" id="PTHR11058">
    <property type="entry name" value="NADH-UBIQUINONE OXIDOREDUCTASE CHAIN 3"/>
    <property type="match status" value="1"/>
</dbReference>
<dbReference type="PANTHER" id="PTHR11058:SF9">
    <property type="entry name" value="NADH-UBIQUINONE OXIDOREDUCTASE CHAIN 3"/>
    <property type="match status" value="1"/>
</dbReference>
<dbReference type="Pfam" id="PF00507">
    <property type="entry name" value="Oxidored_q4"/>
    <property type="match status" value="1"/>
</dbReference>